<evidence type="ECO:0000250" key="1">
    <source>
        <dbReference type="UniProtKB" id="P40149"/>
    </source>
</evidence>
<evidence type="ECO:0000250" key="2">
    <source>
        <dbReference type="UniProtKB" id="Q8CHM7"/>
    </source>
</evidence>
<evidence type="ECO:0000250" key="3">
    <source>
        <dbReference type="UniProtKB" id="Q9UJ83"/>
    </source>
</evidence>
<evidence type="ECO:0000269" key="4">
    <source>
    </source>
</evidence>
<evidence type="ECO:0000269" key="5">
    <source>
    </source>
</evidence>
<evidence type="ECO:0000269" key="6">
    <source>
    </source>
</evidence>
<evidence type="ECO:0000303" key="7">
    <source>
    </source>
</evidence>
<evidence type="ECO:0000305" key="8"/>
<evidence type="ECO:0000305" key="9">
    <source>
    </source>
</evidence>
<feature type="chain" id="PRO_0000090826" description="2-hydroxyacyl-CoA lyase">
    <location>
        <begin position="1"/>
        <end position="560"/>
    </location>
</feature>
<feature type="short sequence motif" description="Peroxisomal target signal 1 (PTS1)" evidence="6">
    <location>
        <begin position="558"/>
        <end position="560"/>
    </location>
</feature>
<feature type="binding site" evidence="1">
    <location>
        <position position="49"/>
    </location>
    <ligand>
        <name>thiamine diphosphate</name>
        <dbReference type="ChEBI" id="CHEBI:58937"/>
    </ligand>
</feature>
<feature type="binding site" evidence="1">
    <location>
        <position position="446"/>
    </location>
    <ligand>
        <name>Mg(2+)</name>
        <dbReference type="ChEBI" id="CHEBI:18420"/>
    </ligand>
</feature>
<feature type="binding site" evidence="1">
    <location>
        <position position="473"/>
    </location>
    <ligand>
        <name>Mg(2+)</name>
        <dbReference type="ChEBI" id="CHEBI:18420"/>
    </ligand>
</feature>
<comment type="function">
    <text evidence="3">Catalyzes a carbon-carbon cleavage reaction; cleaves a 2-hydroxy-3-methylacyl-CoA into formyl-CoA and a 2-methyl-branched fatty aldehyde.</text>
</comment>
<comment type="catalytic activity">
    <reaction evidence="3">
        <text>an (R)-2-hydroxy-long-chain-fatty acyl-CoA = a long-chain fatty aldehyde + formyl-CoA</text>
        <dbReference type="Rhea" id="RHEA:67444"/>
        <dbReference type="ChEBI" id="CHEBI:17176"/>
        <dbReference type="ChEBI" id="CHEBI:57376"/>
        <dbReference type="ChEBI" id="CHEBI:170012"/>
        <dbReference type="EC" id="4.1.2.63"/>
    </reaction>
    <physiologicalReaction direction="left-to-right" evidence="3">
        <dbReference type="Rhea" id="RHEA:67445"/>
    </physiologicalReaction>
</comment>
<comment type="catalytic activity">
    <reaction evidence="3">
        <text>a 2-hydroxy-3-methyl fatty acyl-CoA = a 2-methyl-branched fatty aldehyde + formyl-CoA</text>
        <dbReference type="Rhea" id="RHEA:25375"/>
        <dbReference type="ChEBI" id="CHEBI:49188"/>
        <dbReference type="ChEBI" id="CHEBI:57376"/>
        <dbReference type="ChEBI" id="CHEBI:58783"/>
        <dbReference type="EC" id="4.1.2.63"/>
    </reaction>
    <physiologicalReaction direction="left-to-right" evidence="3">
        <dbReference type="Rhea" id="RHEA:25376"/>
    </physiologicalReaction>
</comment>
<comment type="cofactor">
    <cofactor evidence="2">
        <name>Mg(2+)</name>
        <dbReference type="ChEBI" id="CHEBI:18420"/>
    </cofactor>
    <text evidence="2">Binds 1 Mg(2+) ion per subunit.</text>
</comment>
<comment type="cofactor">
    <cofactor evidence="2">
        <name>thiamine diphosphate</name>
        <dbReference type="ChEBI" id="CHEBI:58937"/>
    </cofactor>
    <text evidence="2">Binds 1 thiamine pyrophosphate per subunit.</text>
</comment>
<comment type="subcellular location">
    <subcellularLocation>
        <location evidence="4">Cytoplasm</location>
    </subcellularLocation>
    <subcellularLocation>
        <location evidence="5 6">Peroxisome matrix</location>
    </subcellularLocation>
</comment>
<comment type="domain">
    <text evidence="9">Peroxisomal targeting signal 1 (PTS1) is a tripeptide located at the C-terminus of more than 95% of all peroxisomal matrix proteins. The prototypical PTS1 is the terminal tripeptide SKL (serine-lysine-leucine) but the consensus of PTS1 is defined as [S/A/H/C/E/P/Q/V] [K/R/H/Q] [L/F]. However, this description of the PTS1 consensus must probably be expanded beyond the terminal tripeptide.</text>
</comment>
<comment type="disruption phenotype">
    <text evidence="6">Does not affect growth on oleate.</text>
</comment>
<comment type="similarity">
    <text evidence="8">Belongs to the TPP enzyme family.</text>
</comment>
<proteinExistence type="evidence at protein level"/>
<keyword id="KW-0963">Cytoplasm</keyword>
<keyword id="KW-0456">Lyase</keyword>
<keyword id="KW-0460">Magnesium</keyword>
<keyword id="KW-0479">Metal-binding</keyword>
<keyword id="KW-0576">Peroxisome</keyword>
<keyword id="KW-1185">Reference proteome</keyword>
<keyword id="KW-0786">Thiamine pyrophosphate</keyword>
<organism>
    <name type="scientific">Saccharomyces cerevisiae (strain ATCC 204508 / S288c)</name>
    <name type="common">Baker's yeast</name>
    <dbReference type="NCBI Taxonomy" id="559292"/>
    <lineage>
        <taxon>Eukaryota</taxon>
        <taxon>Fungi</taxon>
        <taxon>Dikarya</taxon>
        <taxon>Ascomycota</taxon>
        <taxon>Saccharomycotina</taxon>
        <taxon>Saccharomycetes</taxon>
        <taxon>Saccharomycetales</taxon>
        <taxon>Saccharomycetaceae</taxon>
        <taxon>Saccharomyces</taxon>
    </lineage>
</organism>
<sequence length="560" mass="61288">MTTTATQHFAQLLQKYGIDTVFGIVGIPIVQLADTMVANGIKFIPCRNEQAASYAASAYGYISDKPGVLLIVGGPGLIHALAGIYNSMSNRWPLLVIAGSSSQSDIHKGGFQELDQVSLLSPFLKFTGKLTPDNIDMITQKALNYCIQGTAGVSYIDVPADFIEYEKPLEGNDRTGNELPMILTPNICGPDPSKIKKVVQLILQHKNKNILIVIGKGAVKNSHEIRRLVNTFNLPFLPTPMAKGIVPDSSPLNVSSARSQALKIADIVLVLGARLNWILHFGTSPKWNSESIFIQFDSNPETLGDNNVSPGADLSIWGDIGLSVTALVEELTRQDSCWKYSGVKQEIREKIQLNQTRLLRKEKTRGAQLNYNQVYGTLRPLIDDYRTILVTEGANTMDIARISFPTDAPRRRLDAGTNATMGIGLGYALACKASHPELDVVLIQGDSAFGFSAMEIETAVRCQLALVIVVMNNSGIYHGEKDIEGDLPPTALSKNCRYDLVGKGLGANDFFVNTISELSRCFQQAVQLSRTKRETSVINVIIEPGEQKQIAFAWQNKPRL</sequence>
<protein>
    <recommendedName>
        <fullName evidence="8">2-hydroxyacyl-CoA lyase</fullName>
        <ecNumber evidence="3">4.1.2.63</ecNumber>
    </recommendedName>
    <alternativeName>
        <fullName evidence="7">Peroxisomal protein 1</fullName>
    </alternativeName>
</protein>
<accession>P39994</accession>
<accession>D3DLM9</accession>
<gene>
    <name evidence="7" type="primary">PXP1</name>
    <name type="ordered locus">YEL020C</name>
</gene>
<name>PXP1_YEAST</name>
<reference key="1">
    <citation type="journal article" date="1997" name="Nature">
        <title>The nucleotide sequence of Saccharomyces cerevisiae chromosome V.</title>
        <authorList>
            <person name="Dietrich F.S."/>
            <person name="Mulligan J.T."/>
            <person name="Hennessy K.M."/>
            <person name="Yelton M.A."/>
            <person name="Allen E."/>
            <person name="Araujo R."/>
            <person name="Aviles E."/>
            <person name="Berno A."/>
            <person name="Brennan T."/>
            <person name="Carpenter J."/>
            <person name="Chen E."/>
            <person name="Cherry J.M."/>
            <person name="Chung E."/>
            <person name="Duncan M."/>
            <person name="Guzman E."/>
            <person name="Hartzell G."/>
            <person name="Hunicke-Smith S."/>
            <person name="Hyman R.W."/>
            <person name="Kayser A."/>
            <person name="Komp C."/>
            <person name="Lashkari D."/>
            <person name="Lew H."/>
            <person name="Lin D."/>
            <person name="Mosedale D."/>
            <person name="Nakahara K."/>
            <person name="Namath A."/>
            <person name="Norgren R."/>
            <person name="Oefner P."/>
            <person name="Oh C."/>
            <person name="Petel F.X."/>
            <person name="Roberts D."/>
            <person name="Sehl P."/>
            <person name="Schramm S."/>
            <person name="Shogren T."/>
            <person name="Smith V."/>
            <person name="Taylor P."/>
            <person name="Wei Y."/>
            <person name="Botstein D."/>
            <person name="Davis R.W."/>
        </authorList>
    </citation>
    <scope>NUCLEOTIDE SEQUENCE [LARGE SCALE GENOMIC DNA]</scope>
    <source>
        <strain>ATCC 204508 / S288c</strain>
    </source>
</reference>
<reference key="2">
    <citation type="journal article" date="2014" name="G3 (Bethesda)">
        <title>The reference genome sequence of Saccharomyces cerevisiae: Then and now.</title>
        <authorList>
            <person name="Engel S.R."/>
            <person name="Dietrich F.S."/>
            <person name="Fisk D.G."/>
            <person name="Binkley G."/>
            <person name="Balakrishnan R."/>
            <person name="Costanzo M.C."/>
            <person name="Dwight S.S."/>
            <person name="Hitz B.C."/>
            <person name="Karra K."/>
            <person name="Nash R.S."/>
            <person name="Weng S."/>
            <person name="Wong E.D."/>
            <person name="Lloyd P."/>
            <person name="Skrzypek M.S."/>
            <person name="Miyasato S.R."/>
            <person name="Simison M."/>
            <person name="Cherry J.M."/>
        </authorList>
    </citation>
    <scope>GENOME REANNOTATION</scope>
    <source>
        <strain>ATCC 204508 / S288c</strain>
    </source>
</reference>
<reference key="3">
    <citation type="journal article" date="2003" name="Nature">
        <title>Global analysis of protein localization in budding yeast.</title>
        <authorList>
            <person name="Huh W.-K."/>
            <person name="Falvo J.V."/>
            <person name="Gerke L.C."/>
            <person name="Carroll A.S."/>
            <person name="Howson R.W."/>
            <person name="Weissman J.S."/>
            <person name="O'Shea E.K."/>
        </authorList>
    </citation>
    <scope>SUBCELLULAR LOCATION [LARGE SCALE ANALYSIS]</scope>
</reference>
<reference key="4">
    <citation type="journal article" date="2016" name="Nat. Methods">
        <title>One library to make them all: streamlining the creation of yeast libraries via a SWAp-Tag strategy.</title>
        <authorList>
            <person name="Yofe I."/>
            <person name="Weill U."/>
            <person name="Meurer M."/>
            <person name="Chuartzman S."/>
            <person name="Zalckvar E."/>
            <person name="Goldman O."/>
            <person name="Ben-Dor S."/>
            <person name="Schuetze C."/>
            <person name="Wiedemann N."/>
            <person name="Knop M."/>
            <person name="Khmelinskii A."/>
            <person name="Schuldiner M."/>
        </authorList>
    </citation>
    <scope>IDENTIFICATION</scope>
    <scope>SUBCELLULAR LOCATION</scope>
</reference>
<reference key="5">
    <citation type="journal article" date="2016" name="Traffic">
        <title>Identification of new fungal peroxisomal matrix proteins and revision of the PTS1 consensus.</title>
        <authorList>
            <person name="Noetzel C."/>
            <person name="Lingner T."/>
            <person name="Klingenberg H."/>
            <person name="Thoms S."/>
        </authorList>
    </citation>
    <scope>DOMAIN</scope>
    <scope>SUBCELLULAR LOCATION</scope>
    <scope>FUNCTION</scope>
    <scope>DISRUPTION PHENOTYPE</scope>
</reference>
<dbReference type="EC" id="4.1.2.63" evidence="3"/>
<dbReference type="EMBL" id="U18530">
    <property type="protein sequence ID" value="AAB64497.1"/>
    <property type="molecule type" value="Genomic_DNA"/>
</dbReference>
<dbReference type="EMBL" id="BK006939">
    <property type="protein sequence ID" value="DAA07633.1"/>
    <property type="molecule type" value="Genomic_DNA"/>
</dbReference>
<dbReference type="PIR" id="S50439">
    <property type="entry name" value="S50439"/>
</dbReference>
<dbReference type="RefSeq" id="NP_010895.1">
    <property type="nucleotide sequence ID" value="NM_001178835.1"/>
</dbReference>
<dbReference type="SMR" id="P39994"/>
<dbReference type="BioGRID" id="36710">
    <property type="interactions" value="149"/>
</dbReference>
<dbReference type="DIP" id="DIP-5281N"/>
<dbReference type="FunCoup" id="P39994">
    <property type="interactions" value="522"/>
</dbReference>
<dbReference type="IntAct" id="P39994">
    <property type="interactions" value="10"/>
</dbReference>
<dbReference type="STRING" id="4932.YEL020C"/>
<dbReference type="PaxDb" id="4932-YEL020C"/>
<dbReference type="PeptideAtlas" id="P39994"/>
<dbReference type="EnsemblFungi" id="YEL020C_mRNA">
    <property type="protein sequence ID" value="YEL020C"/>
    <property type="gene ID" value="YEL020C"/>
</dbReference>
<dbReference type="GeneID" id="856694"/>
<dbReference type="KEGG" id="sce:YEL020C"/>
<dbReference type="AGR" id="SGD:S000000746"/>
<dbReference type="SGD" id="S000000746">
    <property type="gene designation" value="PXP1"/>
</dbReference>
<dbReference type="VEuPathDB" id="FungiDB:YEL020C"/>
<dbReference type="eggNOG" id="KOG1185">
    <property type="taxonomic scope" value="Eukaryota"/>
</dbReference>
<dbReference type="GeneTree" id="ENSGT00940000156802"/>
<dbReference type="HOGENOM" id="CLU_013748_3_3_1"/>
<dbReference type="InParanoid" id="P39994"/>
<dbReference type="OMA" id="PGPYGCL"/>
<dbReference type="OrthoDB" id="10006023at2759"/>
<dbReference type="BioCyc" id="YEAST:G3O-30145-MONOMER"/>
<dbReference type="Reactome" id="R-SCE-389599">
    <property type="pathway name" value="Alpha-oxidation of phytanate"/>
</dbReference>
<dbReference type="Reactome" id="R-SCE-9033241">
    <property type="pathway name" value="Peroxisomal protein import"/>
</dbReference>
<dbReference type="BioGRID-ORCS" id="856694">
    <property type="hits" value="0 hits in 10 CRISPR screens"/>
</dbReference>
<dbReference type="PRO" id="PR:P39994"/>
<dbReference type="Proteomes" id="UP000002311">
    <property type="component" value="Chromosome V"/>
</dbReference>
<dbReference type="RNAct" id="P39994">
    <property type="molecule type" value="protein"/>
</dbReference>
<dbReference type="GO" id="GO:0005737">
    <property type="term" value="C:cytoplasm"/>
    <property type="evidence" value="ECO:0007005"/>
    <property type="project" value="SGD"/>
</dbReference>
<dbReference type="GO" id="GO:0005782">
    <property type="term" value="C:peroxisomal matrix"/>
    <property type="evidence" value="ECO:0007669"/>
    <property type="project" value="UniProtKB-SubCell"/>
</dbReference>
<dbReference type="GO" id="GO:0005777">
    <property type="term" value="C:peroxisome"/>
    <property type="evidence" value="ECO:0000314"/>
    <property type="project" value="SGD"/>
</dbReference>
<dbReference type="GO" id="GO:0106359">
    <property type="term" value="F:2-hydroxyacyl-CoA lyase activity"/>
    <property type="evidence" value="ECO:0007669"/>
    <property type="project" value="RHEA"/>
</dbReference>
<dbReference type="GO" id="GO:0016830">
    <property type="term" value="F:carbon-carbon lyase activity"/>
    <property type="evidence" value="ECO:0000250"/>
    <property type="project" value="SGD"/>
</dbReference>
<dbReference type="GO" id="GO:0000287">
    <property type="term" value="F:magnesium ion binding"/>
    <property type="evidence" value="ECO:0007669"/>
    <property type="project" value="InterPro"/>
</dbReference>
<dbReference type="GO" id="GO:0030976">
    <property type="term" value="F:thiamine pyrophosphate binding"/>
    <property type="evidence" value="ECO:0000318"/>
    <property type="project" value="GO_Central"/>
</dbReference>
<dbReference type="GO" id="GO:0001561">
    <property type="term" value="P:fatty acid alpha-oxidation"/>
    <property type="evidence" value="ECO:0000318"/>
    <property type="project" value="GO_Central"/>
</dbReference>
<dbReference type="CDD" id="cd02004">
    <property type="entry name" value="TPP_BZL_OCoD_HPCL"/>
    <property type="match status" value="1"/>
</dbReference>
<dbReference type="CDD" id="cd07035">
    <property type="entry name" value="TPP_PYR_POX_like"/>
    <property type="match status" value="1"/>
</dbReference>
<dbReference type="FunFam" id="3.40.50.1220:FF:000052">
    <property type="entry name" value="Putative 2-hydroxyacyl-CoA lyase"/>
    <property type="match status" value="1"/>
</dbReference>
<dbReference type="FunFam" id="3.40.50.970:FF:000054">
    <property type="entry name" value="Putative 2-hydroxyphytanoyl-CoA lyase"/>
    <property type="match status" value="1"/>
</dbReference>
<dbReference type="FunFam" id="3.40.50.970:FF:000044">
    <property type="entry name" value="Putative acetolactate synthase IlvG"/>
    <property type="match status" value="1"/>
</dbReference>
<dbReference type="Gene3D" id="3.40.50.970">
    <property type="match status" value="2"/>
</dbReference>
<dbReference type="Gene3D" id="3.40.50.1220">
    <property type="entry name" value="TPP-binding domain"/>
    <property type="match status" value="1"/>
</dbReference>
<dbReference type="InterPro" id="IPR029035">
    <property type="entry name" value="DHS-like_NAD/FAD-binding_dom"/>
</dbReference>
<dbReference type="InterPro" id="IPR045025">
    <property type="entry name" value="HACL1-like"/>
</dbReference>
<dbReference type="InterPro" id="IPR029061">
    <property type="entry name" value="THDP-binding"/>
</dbReference>
<dbReference type="InterPro" id="IPR012000">
    <property type="entry name" value="Thiamin_PyroP_enz_cen_dom"/>
</dbReference>
<dbReference type="InterPro" id="IPR012001">
    <property type="entry name" value="Thiamin_PyroP_enz_TPP-bd_dom"/>
</dbReference>
<dbReference type="InterPro" id="IPR000399">
    <property type="entry name" value="TPP-bd_CS"/>
</dbReference>
<dbReference type="InterPro" id="IPR011766">
    <property type="entry name" value="TPP_enzyme_TPP-bd"/>
</dbReference>
<dbReference type="PANTHER" id="PTHR43710">
    <property type="entry name" value="2-HYDROXYACYL-COA LYASE"/>
    <property type="match status" value="1"/>
</dbReference>
<dbReference type="PANTHER" id="PTHR43710:SF2">
    <property type="entry name" value="2-HYDROXYACYL-COA LYASE 1"/>
    <property type="match status" value="1"/>
</dbReference>
<dbReference type="Pfam" id="PF02775">
    <property type="entry name" value="TPP_enzyme_C"/>
    <property type="match status" value="1"/>
</dbReference>
<dbReference type="Pfam" id="PF00205">
    <property type="entry name" value="TPP_enzyme_M"/>
    <property type="match status" value="1"/>
</dbReference>
<dbReference type="Pfam" id="PF02776">
    <property type="entry name" value="TPP_enzyme_N"/>
    <property type="match status" value="1"/>
</dbReference>
<dbReference type="SUPFAM" id="SSF52467">
    <property type="entry name" value="DHS-like NAD/FAD-binding domain"/>
    <property type="match status" value="1"/>
</dbReference>
<dbReference type="SUPFAM" id="SSF52518">
    <property type="entry name" value="Thiamin diphosphate-binding fold (THDP-binding)"/>
    <property type="match status" value="2"/>
</dbReference>
<dbReference type="PROSITE" id="PS00187">
    <property type="entry name" value="TPP_ENZYMES"/>
    <property type="match status" value="1"/>
</dbReference>